<accession>P0DM58</accession>
<comment type="function">
    <text evidence="5">3'-5'-exoribonuclease that specifically recognizes RNAs polyuridylated at their 3' end and mediates their degradation. Component of an exosome-independent RNA degradation pathway that mediates degradation of cytoplasmic mRNAs that have been deadenylated and subsequently uridylated at their 3' (Probable).</text>
</comment>
<comment type="cofactor">
    <cofactor evidence="1">
        <name>Mg(2+)</name>
        <dbReference type="ChEBI" id="CHEBI:18420"/>
    </cofactor>
    <cofactor evidence="1">
        <name>Mn(2+)</name>
        <dbReference type="ChEBI" id="CHEBI:29035"/>
    </cofactor>
</comment>
<comment type="subcellular location">
    <subcellularLocation>
        <location evidence="1 3">Cytoplasm</location>
    </subcellularLocation>
    <subcellularLocation>
        <location evidence="5">Cytoplasm</location>
        <location evidence="5">P-body</location>
    </subcellularLocation>
</comment>
<comment type="tissue specificity">
    <text evidence="3">Widely expressed.</text>
</comment>
<comment type="similarity">
    <text evidence="1">Belongs to the RNR ribonuclease family. DIS3L2 subfamily.</text>
</comment>
<comment type="caution">
    <text evidence="4">The protein in cv. Landsberg erecta and cv. Columbia (AC Q0WPN0) only differ by one residue in position 705 (a Pro and Arg residue, respectively); this variation leading to inactivate the protein in cv. Columbia (AC Q0WPN0).</text>
</comment>
<gene>
    <name type="primary">SOV</name>
    <name type="synonym">DIS3L2</name>
</gene>
<sequence length="1055" mass="116784">MKSASSEQSVERIENGHKKKRNRPQKQNRRSKQSSVPIEDAHVEESLDGRDSSRSKAKDSTSSSKQQRPNTDELEAMRASNVAFNSMPPMRAESGYPRRSASPLLSSPEVSKQLLSKSCPDPRACEQSPGMNGELFQQIEGSSQRKIFSSHWSLDAVTEALEKGEAFKALFRVNAHNRNEAYCKIDGVPTDILINGNVCQSRAVEGDTVVIKLDPLSLWPKMKGFVTESAAKPEGTNSPPEKDDKKARQKNGIDVVEGFEDGFSKNKSSVIGKGAKNGVTPSSPPSLDSCLGSFCEQKGNCSAVDKLCGILSSFPHKRPTGQVVAVVEKSLVRDSIVGLLDVKGWIHYKESDPKRCKSPLSLSDDEYVQLMPADPRFPKLIVPFHVLPGSIRARLENLDPNLEAELVAAQIVDWGEGSPFPVAQITHLFGRGSELEPQINAILYQNSVCDSDFSPGSLTSLPRVPWEVPEEEVQRRKDLRDLCVLTIDPSTATDLDDALSVQSLPGGFFRVGVHIADVSYFVLPETALDTEARFRSTSVYLMQRKISMLPPLLSENVGSLSPGADRLAFSILWDLNREGDVIDRWIGRTIIRSCCKLSYDHAQDIIDGKSDVAENGWPALHGSFKWCDVTRSVKQLSEISTTLRQKRFRNGALQLENSKPVFLFDEHGVPYDFVTCSRKGSNFLVEEFMLLANMTAAEVISQAYPASSLLRRHPEPNTRKLKEFEGFCSKHGMDLDISSSGQLQDSLEKITGNLKDDSVFVDILNNYAIKPMQLASYFCTGNLKDSVAEWGHYALAVPLYTHFTSPLRRYPDIVVHRALAAALEAEELYSKQKQTAIDEGRSCFTGIHFNKDAAESIEGKEALSVAALKHGVPSTEILSDVAAYCNERKLAARKVRDACDKLYTWFVLKQKEIFPCEARVMNLGSRFMTVYISKLGIERRIYYDQIEGLCADWLEATSTLIVDKLYSKRGGRGFFKPMKEAVYLVSPCEVCVAKCSALSVHDTESPEAVSIDEVAPAVFPLTIQLFSTIPVVLHAVGGDDGPLDIGARLYMSSYY</sequence>
<name>DI3L2_ARATH</name>
<evidence type="ECO:0000255" key="1">
    <source>
        <dbReference type="HAMAP-Rule" id="MF_03045"/>
    </source>
</evidence>
<evidence type="ECO:0000256" key="2">
    <source>
        <dbReference type="SAM" id="MobiDB-lite"/>
    </source>
</evidence>
<evidence type="ECO:0000269" key="3">
    <source>
    </source>
</evidence>
<evidence type="ECO:0000305" key="4"/>
<evidence type="ECO:0000305" key="5">
    <source>
    </source>
</evidence>
<organism>
    <name type="scientific">Arabidopsis thaliana</name>
    <name type="common">Mouse-ear cress</name>
    <dbReference type="NCBI Taxonomy" id="3702"/>
    <lineage>
        <taxon>Eukaryota</taxon>
        <taxon>Viridiplantae</taxon>
        <taxon>Streptophyta</taxon>
        <taxon>Embryophyta</taxon>
        <taxon>Tracheophyta</taxon>
        <taxon>Spermatophyta</taxon>
        <taxon>Magnoliopsida</taxon>
        <taxon>eudicotyledons</taxon>
        <taxon>Gunneridae</taxon>
        <taxon>Pentapetalae</taxon>
        <taxon>rosids</taxon>
        <taxon>malvids</taxon>
        <taxon>Brassicales</taxon>
        <taxon>Brassicaceae</taxon>
        <taxon>Camelineae</taxon>
        <taxon>Arabidopsis</taxon>
    </lineage>
</organism>
<reference key="1">
    <citation type="journal article" date="2010" name="Proc. Natl. Acad. Sci. U.S.A.">
        <title>Conserved RNaseII domain protein functions in cytoplasmic mRNA decay and suppresses Arabidopsis decapping mutant phenotypes.</title>
        <authorList>
            <person name="Zhang W."/>
            <person name="Murphy C."/>
            <person name="Sieburth L.E."/>
        </authorList>
    </citation>
    <scope>FUNCTION</scope>
    <scope>SUBCELLULAR LOCATION</scope>
    <scope>TISSUE SPECIFICITY</scope>
    <scope>MUTAGENESIS OF PRO-705</scope>
    <source>
        <strain>cv. Landsberg erecta</strain>
    </source>
</reference>
<dbReference type="EC" id="3.1.13.-" evidence="1"/>
<dbReference type="SMR" id="P0DM58"/>
<dbReference type="ExpressionAtlas" id="P0DM58">
    <property type="expression patterns" value="baseline and differential"/>
</dbReference>
<dbReference type="GO" id="GO:0005737">
    <property type="term" value="C:cytoplasm"/>
    <property type="evidence" value="ECO:0000314"/>
    <property type="project" value="UniProtKB"/>
</dbReference>
<dbReference type="GO" id="GO:0000932">
    <property type="term" value="C:P-body"/>
    <property type="evidence" value="ECO:0007669"/>
    <property type="project" value="UniProtKB-SubCell"/>
</dbReference>
<dbReference type="GO" id="GO:0000175">
    <property type="term" value="F:3'-5'-RNA exonuclease activity"/>
    <property type="evidence" value="ECO:0007669"/>
    <property type="project" value="UniProtKB-UniRule"/>
</dbReference>
<dbReference type="GO" id="GO:0046872">
    <property type="term" value="F:metal ion binding"/>
    <property type="evidence" value="ECO:0007669"/>
    <property type="project" value="UniProtKB-KW"/>
</dbReference>
<dbReference type="GO" id="GO:0003723">
    <property type="term" value="F:RNA binding"/>
    <property type="evidence" value="ECO:0007669"/>
    <property type="project" value="UniProtKB-KW"/>
</dbReference>
<dbReference type="GO" id="GO:0000956">
    <property type="term" value="P:nuclear-transcribed mRNA catabolic process"/>
    <property type="evidence" value="ECO:0000304"/>
    <property type="project" value="UniProtKB"/>
</dbReference>
<dbReference type="GO" id="GO:1990074">
    <property type="term" value="P:polyuridylation-dependent mRNA catabolic process"/>
    <property type="evidence" value="ECO:0007669"/>
    <property type="project" value="UniProtKB-UniRule"/>
</dbReference>
<dbReference type="FunFam" id="2.40.50.690:FF:000007">
    <property type="entry name" value="DIS3-like exonuclease 2"/>
    <property type="match status" value="1"/>
</dbReference>
<dbReference type="Gene3D" id="2.40.50.690">
    <property type="match status" value="1"/>
</dbReference>
<dbReference type="Gene3D" id="2.40.50.700">
    <property type="match status" value="1"/>
</dbReference>
<dbReference type="HAMAP" id="MF_03045">
    <property type="entry name" value="DIS3L2"/>
    <property type="match status" value="1"/>
</dbReference>
<dbReference type="InterPro" id="IPR041505">
    <property type="entry name" value="Dis3_CSD2"/>
</dbReference>
<dbReference type="InterPro" id="IPR028591">
    <property type="entry name" value="DIS3L2"/>
</dbReference>
<dbReference type="InterPro" id="IPR012340">
    <property type="entry name" value="NA-bd_OB-fold"/>
</dbReference>
<dbReference type="InterPro" id="IPR001900">
    <property type="entry name" value="RNase_II/R"/>
</dbReference>
<dbReference type="InterPro" id="IPR022966">
    <property type="entry name" value="RNase_II/R_CS"/>
</dbReference>
<dbReference type="InterPro" id="IPR050180">
    <property type="entry name" value="RNR_Ribonuclease"/>
</dbReference>
<dbReference type="PANTHER" id="PTHR23355:SF9">
    <property type="entry name" value="DIS3-LIKE EXONUCLEASE 2"/>
    <property type="match status" value="1"/>
</dbReference>
<dbReference type="PANTHER" id="PTHR23355">
    <property type="entry name" value="RIBONUCLEASE"/>
    <property type="match status" value="1"/>
</dbReference>
<dbReference type="Pfam" id="PF17849">
    <property type="entry name" value="OB_Dis3"/>
    <property type="match status" value="1"/>
</dbReference>
<dbReference type="Pfam" id="PF00773">
    <property type="entry name" value="RNB"/>
    <property type="match status" value="1"/>
</dbReference>
<dbReference type="SMART" id="SM00955">
    <property type="entry name" value="RNB"/>
    <property type="match status" value="1"/>
</dbReference>
<dbReference type="SUPFAM" id="SSF50249">
    <property type="entry name" value="Nucleic acid-binding proteins"/>
    <property type="match status" value="3"/>
</dbReference>
<dbReference type="PROSITE" id="PS01175">
    <property type="entry name" value="RIBONUCLEASE_II"/>
    <property type="match status" value="1"/>
</dbReference>
<keyword id="KW-0963">Cytoplasm</keyword>
<keyword id="KW-0269">Exonuclease</keyword>
<keyword id="KW-0378">Hydrolase</keyword>
<keyword id="KW-0460">Magnesium</keyword>
<keyword id="KW-0464">Manganese</keyword>
<keyword id="KW-0479">Metal-binding</keyword>
<keyword id="KW-0540">Nuclease</keyword>
<keyword id="KW-0694">RNA-binding</keyword>
<proteinExistence type="evidence at protein level"/>
<protein>
    <recommendedName>
        <fullName evidence="1">DIS3-like exonuclease 2</fullName>
        <ecNumber evidence="1">3.1.13.-</ecNumber>
    </recommendedName>
    <alternativeName>
        <fullName>Protein SUPPRESSOR OF VARICOSE</fullName>
    </alternativeName>
</protein>
<feature type="chain" id="PRO_0000423298" description="DIS3-like exonuclease 2">
    <location>
        <begin position="1"/>
        <end position="1055"/>
    </location>
</feature>
<feature type="region of interest" description="Disordered" evidence="2">
    <location>
        <begin position="1"/>
        <end position="109"/>
    </location>
</feature>
<feature type="region of interest" description="Disordered" evidence="2">
    <location>
        <begin position="229"/>
        <end position="249"/>
    </location>
</feature>
<feature type="compositionally biased region" description="Basic residues" evidence="2">
    <location>
        <begin position="17"/>
        <end position="32"/>
    </location>
</feature>
<feature type="compositionally biased region" description="Basic and acidic residues" evidence="2">
    <location>
        <begin position="39"/>
        <end position="59"/>
    </location>
</feature>
<feature type="compositionally biased region" description="Low complexity" evidence="2">
    <location>
        <begin position="97"/>
        <end position="108"/>
    </location>
</feature>
<feature type="binding site" evidence="1">
    <location>
        <position position="488"/>
    </location>
    <ligand>
        <name>Mg(2+)</name>
        <dbReference type="ChEBI" id="CHEBI:18420"/>
    </ligand>
</feature>
<feature type="binding site" evidence="1">
    <location>
        <position position="497"/>
    </location>
    <ligand>
        <name>Mg(2+)</name>
        <dbReference type="ChEBI" id="CHEBI:18420"/>
    </ligand>
</feature>
<feature type="site" description="Important for catalytic activity" evidence="1">
    <location>
        <position position="496"/>
    </location>
</feature>
<feature type="mutagenesis site" description="Loss of activity." evidence="3">
    <original>P</original>
    <variation>R</variation>
    <location>
        <position position="705"/>
    </location>
</feature>